<accession>Q9V8Y7</accession>
<organism>
    <name type="scientific">Drosophila melanogaster</name>
    <name type="common">Fruit fly</name>
    <dbReference type="NCBI Taxonomy" id="7227"/>
    <lineage>
        <taxon>Eukaryota</taxon>
        <taxon>Metazoa</taxon>
        <taxon>Ecdysozoa</taxon>
        <taxon>Arthropoda</taxon>
        <taxon>Hexapoda</taxon>
        <taxon>Insecta</taxon>
        <taxon>Pterygota</taxon>
        <taxon>Neoptera</taxon>
        <taxon>Endopterygota</taxon>
        <taxon>Diptera</taxon>
        <taxon>Brachycera</taxon>
        <taxon>Muscomorpha</taxon>
        <taxon>Ephydroidea</taxon>
        <taxon>Drosophilidae</taxon>
        <taxon>Drosophila</taxon>
        <taxon>Sophophora</taxon>
    </lineage>
</organism>
<feature type="chain" id="PRO_0000174254" description="Odorant receptor 56a">
    <location>
        <begin position="1"/>
        <end position="419"/>
    </location>
</feature>
<feature type="topological domain" description="Cytoplasmic" evidence="2">
    <location>
        <begin position="1"/>
        <end position="41"/>
    </location>
</feature>
<feature type="transmembrane region" description="Helical; Name=1" evidence="2">
    <location>
        <begin position="42"/>
        <end position="62"/>
    </location>
</feature>
<feature type="topological domain" description="Extracellular" evidence="2">
    <location>
        <begin position="63"/>
        <end position="76"/>
    </location>
</feature>
<feature type="transmembrane region" description="Helical; Name=2" evidence="2">
    <location>
        <begin position="77"/>
        <end position="97"/>
    </location>
</feature>
<feature type="topological domain" description="Cytoplasmic" evidence="2">
    <location>
        <begin position="98"/>
        <end position="137"/>
    </location>
</feature>
<feature type="transmembrane region" description="Helical; Name=3" evidence="2">
    <location>
        <begin position="138"/>
        <end position="158"/>
    </location>
</feature>
<feature type="topological domain" description="Extracellular" evidence="2">
    <location>
        <begin position="159"/>
        <end position="196"/>
    </location>
</feature>
<feature type="transmembrane region" description="Helical; Name=4" evidence="2">
    <location>
        <begin position="197"/>
        <end position="217"/>
    </location>
</feature>
<feature type="topological domain" description="Cytoplasmic" evidence="2">
    <location>
        <begin position="218"/>
        <end position="292"/>
    </location>
</feature>
<feature type="transmembrane region" description="Helical; Name=5" evidence="2">
    <location>
        <begin position="293"/>
        <end position="313"/>
    </location>
</feature>
<feature type="topological domain" description="Extracellular" evidence="2">
    <location>
        <begin position="314"/>
        <end position="323"/>
    </location>
</feature>
<feature type="transmembrane region" description="Helical; Name=6" evidence="2">
    <location>
        <begin position="324"/>
        <end position="344"/>
    </location>
</feature>
<feature type="topological domain" description="Cytoplasmic" evidence="2">
    <location>
        <begin position="345"/>
        <end position="389"/>
    </location>
</feature>
<feature type="transmembrane region" description="Helical; Name=7" evidence="2">
    <location>
        <begin position="390"/>
        <end position="410"/>
    </location>
</feature>
<feature type="topological domain" description="Extracellular" evidence="2">
    <location>
        <begin position="411"/>
        <end position="419"/>
    </location>
</feature>
<gene>
    <name type="primary">Or56a</name>
    <name type="ORF">CG12501</name>
</gene>
<proteinExistence type="evidence at transcript level"/>
<protein>
    <recommendedName>
        <fullName>Odorant receptor 56a</fullName>
    </recommendedName>
</protein>
<name>OR56A_DROME</name>
<comment type="function">
    <text evidence="4">Odorant receptor which mediates acceptance or avoidance behavior, depending on its substrates. The odorant receptor repertoire encodes a large collection of odor stimuli that vary widely in identity, intensity, and duration. May form a complex with Orco to form odorant-sensing units, providing sensitive and prolonged odorant signaling and calcium permeability. Specific receptor for geosmin, a microbial odorant that constitutes an ecologically relevant stimulus that alerts flies to the presence of harmful microbes and induces avoidance behavior.</text>
</comment>
<comment type="subunit">
    <text evidence="1">Interacts with Orco. Complexes exist early in the endomembrane system in olfactory sensory neurons (OSNs), coupling these complexes to the conserved ciliary trafficking pathway (By similarity).</text>
</comment>
<comment type="subcellular location">
    <subcellularLocation>
        <location evidence="1">Cell membrane</location>
        <topology evidence="1">Multi-pass membrane protein</topology>
    </subcellularLocation>
</comment>
<comment type="tissue specificity">
    <text evidence="3 4">Expressed in olfactory sensory neurons in the antenna.</text>
</comment>
<comment type="miscellaneous">
    <text>The atypical heteromeric and topological design of the odorant receptors appears to be an insect-specific solution for odor recognition, making the OR/Orco complex an attractive target for the development of highly selective insect repellents to disrupt olfactory-mediated host-seeking behaviors of insect disease vectors. Odor-evoked OR currents are independent of known G-protein-coupled second messenger pathways.</text>
</comment>
<comment type="similarity">
    <text evidence="5">Belongs to the insect chemoreceptor superfamily. Heteromeric odorant receptor channel (TC 1.A.69) family. Or30a subfamily.</text>
</comment>
<dbReference type="EMBL" id="AE013599">
    <property type="protein sequence ID" value="AAF57517.2"/>
    <property type="molecule type" value="Genomic_DNA"/>
</dbReference>
<dbReference type="RefSeq" id="NP_523796.2">
    <property type="nucleotide sequence ID" value="NM_079072.2"/>
</dbReference>
<dbReference type="SMR" id="Q9V8Y7"/>
<dbReference type="BioGRID" id="62925">
    <property type="interactions" value="1"/>
</dbReference>
<dbReference type="DIP" id="DIP-20737N"/>
<dbReference type="FunCoup" id="Q9V8Y7">
    <property type="interactions" value="17"/>
</dbReference>
<dbReference type="IntAct" id="Q9V8Y7">
    <property type="interactions" value="3"/>
</dbReference>
<dbReference type="STRING" id="7227.FBpp0085645"/>
<dbReference type="TCDB" id="1.A.69.1.3">
    <property type="family name" value="the heteromeric odorant receptor channel (horc) family"/>
</dbReference>
<dbReference type="PaxDb" id="7227-FBpp0085645"/>
<dbReference type="EnsemblMetazoa" id="FBtr0086344">
    <property type="protein sequence ID" value="FBpp0085645"/>
    <property type="gene ID" value="FBgn0034473"/>
</dbReference>
<dbReference type="GeneID" id="37269"/>
<dbReference type="KEGG" id="dme:Dmel_CG12501"/>
<dbReference type="AGR" id="FB:FBgn0034473"/>
<dbReference type="CTD" id="37269"/>
<dbReference type="FlyBase" id="FBgn0034473">
    <property type="gene designation" value="Or56a"/>
</dbReference>
<dbReference type="VEuPathDB" id="VectorBase:FBgn0034473"/>
<dbReference type="eggNOG" id="ENOG502T0RU">
    <property type="taxonomic scope" value="Eukaryota"/>
</dbReference>
<dbReference type="HOGENOM" id="CLU_716252_0_0_1"/>
<dbReference type="InParanoid" id="Q9V8Y7"/>
<dbReference type="OMA" id="WYGYVAS"/>
<dbReference type="OrthoDB" id="7281178at2759"/>
<dbReference type="PhylomeDB" id="Q9V8Y7"/>
<dbReference type="BioGRID-ORCS" id="37269">
    <property type="hits" value="0 hits in 1 CRISPR screen"/>
</dbReference>
<dbReference type="GenomeRNAi" id="37269"/>
<dbReference type="PRO" id="PR:Q9V8Y7"/>
<dbReference type="Proteomes" id="UP000000803">
    <property type="component" value="Chromosome 2R"/>
</dbReference>
<dbReference type="Bgee" id="FBgn0034473">
    <property type="expression patterns" value="Expressed in antennal basiconic sensillum ab4 (Drosophila) and 6 other cell types or tissues"/>
</dbReference>
<dbReference type="GO" id="GO:0032590">
    <property type="term" value="C:dendrite membrane"/>
    <property type="evidence" value="ECO:0000250"/>
    <property type="project" value="FlyBase"/>
</dbReference>
<dbReference type="GO" id="GO:0005886">
    <property type="term" value="C:plasma membrane"/>
    <property type="evidence" value="ECO:0000318"/>
    <property type="project" value="GO_Central"/>
</dbReference>
<dbReference type="GO" id="GO:0170020">
    <property type="term" value="F:ionotropic olfactory receptor activity"/>
    <property type="evidence" value="ECO:0000314"/>
    <property type="project" value="FlyBase"/>
</dbReference>
<dbReference type="GO" id="GO:0005549">
    <property type="term" value="F:odorant binding"/>
    <property type="evidence" value="ECO:0000250"/>
    <property type="project" value="FlyBase"/>
</dbReference>
<dbReference type="GO" id="GO:0004984">
    <property type="term" value="F:olfactory receptor activity"/>
    <property type="evidence" value="ECO:0000318"/>
    <property type="project" value="GO_Central"/>
</dbReference>
<dbReference type="GO" id="GO:0050911">
    <property type="term" value="P:detection of chemical stimulus involved in sensory perception of smell"/>
    <property type="evidence" value="ECO:0000314"/>
    <property type="project" value="FlyBase"/>
</dbReference>
<dbReference type="GO" id="GO:0007165">
    <property type="term" value="P:signal transduction"/>
    <property type="evidence" value="ECO:0007669"/>
    <property type="project" value="UniProtKB-KW"/>
</dbReference>
<dbReference type="InterPro" id="IPR004117">
    <property type="entry name" value="7tm6_olfct_rcpt"/>
</dbReference>
<dbReference type="PANTHER" id="PTHR21137">
    <property type="entry name" value="ODORANT RECEPTOR"/>
    <property type="match status" value="1"/>
</dbReference>
<dbReference type="PANTHER" id="PTHR21137:SF40">
    <property type="entry name" value="ODORANT RECEPTOR 56A"/>
    <property type="match status" value="1"/>
</dbReference>
<dbReference type="Pfam" id="PF02949">
    <property type="entry name" value="7tm_6"/>
    <property type="match status" value="1"/>
</dbReference>
<sequence length="419" mass="48920">MFKVKDLLLSPTTFEDPIFGTHLRYFQWYGYVASKDQNRPLLSLIRCTILTASIWLSCALMLARVFRGYENLNDGATSYATAVQYFAVSIAMFNAYVQRDKVISLLRVAHSDIQNLMHEADNREMELLVATQAYTRTITLLIWIPSVIAGLMAYSDCIYRSLFLPKSVFNVPAVRRGEEHPILLFQLFPFGELCDNFVVGYLGPWYALGLGITAIPLWHTFITCLMKYVNLKLQILNKRVEEMDITRLNSKLVIGRLTASELTFWQMQLFKEFVKEQLRIRKFVQELQYLICVPVMADFIIFSVLICFLFFALTVGVPSKMDYFFMFIYLFVMAGILWIYHWHATLIVECHDELSLAYFSCGWYNFEMPLQKMLVFMMMHAQRPMKMRALLVDLNLRTFIDIGRGAYSYFNLLRSSHLY</sequence>
<reference key="1">
    <citation type="journal article" date="2000" name="Science">
        <title>The genome sequence of Drosophila melanogaster.</title>
        <authorList>
            <person name="Adams M.D."/>
            <person name="Celniker S.E."/>
            <person name="Holt R.A."/>
            <person name="Evans C.A."/>
            <person name="Gocayne J.D."/>
            <person name="Amanatides P.G."/>
            <person name="Scherer S.E."/>
            <person name="Li P.W."/>
            <person name="Hoskins R.A."/>
            <person name="Galle R.F."/>
            <person name="George R.A."/>
            <person name="Lewis S.E."/>
            <person name="Richards S."/>
            <person name="Ashburner M."/>
            <person name="Henderson S.N."/>
            <person name="Sutton G.G."/>
            <person name="Wortman J.R."/>
            <person name="Yandell M.D."/>
            <person name="Zhang Q."/>
            <person name="Chen L.X."/>
            <person name="Brandon R.C."/>
            <person name="Rogers Y.-H.C."/>
            <person name="Blazej R.G."/>
            <person name="Champe M."/>
            <person name="Pfeiffer B.D."/>
            <person name="Wan K.H."/>
            <person name="Doyle C."/>
            <person name="Baxter E.G."/>
            <person name="Helt G."/>
            <person name="Nelson C.R."/>
            <person name="Miklos G.L.G."/>
            <person name="Abril J.F."/>
            <person name="Agbayani A."/>
            <person name="An H.-J."/>
            <person name="Andrews-Pfannkoch C."/>
            <person name="Baldwin D."/>
            <person name="Ballew R.M."/>
            <person name="Basu A."/>
            <person name="Baxendale J."/>
            <person name="Bayraktaroglu L."/>
            <person name="Beasley E.M."/>
            <person name="Beeson K.Y."/>
            <person name="Benos P.V."/>
            <person name="Berman B.P."/>
            <person name="Bhandari D."/>
            <person name="Bolshakov S."/>
            <person name="Borkova D."/>
            <person name="Botchan M.R."/>
            <person name="Bouck J."/>
            <person name="Brokstein P."/>
            <person name="Brottier P."/>
            <person name="Burtis K.C."/>
            <person name="Busam D.A."/>
            <person name="Butler H."/>
            <person name="Cadieu E."/>
            <person name="Center A."/>
            <person name="Chandra I."/>
            <person name="Cherry J.M."/>
            <person name="Cawley S."/>
            <person name="Dahlke C."/>
            <person name="Davenport L.B."/>
            <person name="Davies P."/>
            <person name="de Pablos B."/>
            <person name="Delcher A."/>
            <person name="Deng Z."/>
            <person name="Mays A.D."/>
            <person name="Dew I."/>
            <person name="Dietz S.M."/>
            <person name="Dodson K."/>
            <person name="Doup L.E."/>
            <person name="Downes M."/>
            <person name="Dugan-Rocha S."/>
            <person name="Dunkov B.C."/>
            <person name="Dunn P."/>
            <person name="Durbin K.J."/>
            <person name="Evangelista C.C."/>
            <person name="Ferraz C."/>
            <person name="Ferriera S."/>
            <person name="Fleischmann W."/>
            <person name="Fosler C."/>
            <person name="Gabrielian A.E."/>
            <person name="Garg N.S."/>
            <person name="Gelbart W.M."/>
            <person name="Glasser K."/>
            <person name="Glodek A."/>
            <person name="Gong F."/>
            <person name="Gorrell J.H."/>
            <person name="Gu Z."/>
            <person name="Guan P."/>
            <person name="Harris M."/>
            <person name="Harris N.L."/>
            <person name="Harvey D.A."/>
            <person name="Heiman T.J."/>
            <person name="Hernandez J.R."/>
            <person name="Houck J."/>
            <person name="Hostin D."/>
            <person name="Houston K.A."/>
            <person name="Howland T.J."/>
            <person name="Wei M.-H."/>
            <person name="Ibegwam C."/>
            <person name="Jalali M."/>
            <person name="Kalush F."/>
            <person name="Karpen G.H."/>
            <person name="Ke Z."/>
            <person name="Kennison J.A."/>
            <person name="Ketchum K.A."/>
            <person name="Kimmel B.E."/>
            <person name="Kodira C.D."/>
            <person name="Kraft C.L."/>
            <person name="Kravitz S."/>
            <person name="Kulp D."/>
            <person name="Lai Z."/>
            <person name="Lasko P."/>
            <person name="Lei Y."/>
            <person name="Levitsky A.A."/>
            <person name="Li J.H."/>
            <person name="Li Z."/>
            <person name="Liang Y."/>
            <person name="Lin X."/>
            <person name="Liu X."/>
            <person name="Mattei B."/>
            <person name="McIntosh T.C."/>
            <person name="McLeod M.P."/>
            <person name="McPherson D."/>
            <person name="Merkulov G."/>
            <person name="Milshina N.V."/>
            <person name="Mobarry C."/>
            <person name="Morris J."/>
            <person name="Moshrefi A."/>
            <person name="Mount S.M."/>
            <person name="Moy M."/>
            <person name="Murphy B."/>
            <person name="Murphy L."/>
            <person name="Muzny D.M."/>
            <person name="Nelson D.L."/>
            <person name="Nelson D.R."/>
            <person name="Nelson K.A."/>
            <person name="Nixon K."/>
            <person name="Nusskern D.R."/>
            <person name="Pacleb J.M."/>
            <person name="Palazzolo M."/>
            <person name="Pittman G.S."/>
            <person name="Pan S."/>
            <person name="Pollard J."/>
            <person name="Puri V."/>
            <person name="Reese M.G."/>
            <person name="Reinert K."/>
            <person name="Remington K."/>
            <person name="Saunders R.D.C."/>
            <person name="Scheeler F."/>
            <person name="Shen H."/>
            <person name="Shue B.C."/>
            <person name="Siden-Kiamos I."/>
            <person name="Simpson M."/>
            <person name="Skupski M.P."/>
            <person name="Smith T.J."/>
            <person name="Spier E."/>
            <person name="Spradling A.C."/>
            <person name="Stapleton M."/>
            <person name="Strong R."/>
            <person name="Sun E."/>
            <person name="Svirskas R."/>
            <person name="Tector C."/>
            <person name="Turner R."/>
            <person name="Venter E."/>
            <person name="Wang A.H."/>
            <person name="Wang X."/>
            <person name="Wang Z.-Y."/>
            <person name="Wassarman D.A."/>
            <person name="Weinstock G.M."/>
            <person name="Weissenbach J."/>
            <person name="Williams S.M."/>
            <person name="Woodage T."/>
            <person name="Worley K.C."/>
            <person name="Wu D."/>
            <person name="Yang S."/>
            <person name="Yao Q.A."/>
            <person name="Ye J."/>
            <person name="Yeh R.-F."/>
            <person name="Zaveri J.S."/>
            <person name="Zhan M."/>
            <person name="Zhang G."/>
            <person name="Zhao Q."/>
            <person name="Zheng L."/>
            <person name="Zheng X.H."/>
            <person name="Zhong F.N."/>
            <person name="Zhong W."/>
            <person name="Zhou X."/>
            <person name="Zhu S.C."/>
            <person name="Zhu X."/>
            <person name="Smith H.O."/>
            <person name="Gibbs R.A."/>
            <person name="Myers E.W."/>
            <person name="Rubin G.M."/>
            <person name="Venter J.C."/>
        </authorList>
    </citation>
    <scope>NUCLEOTIDE SEQUENCE [LARGE SCALE GENOMIC DNA]</scope>
    <source>
        <strain>Berkeley</strain>
    </source>
</reference>
<reference key="2">
    <citation type="journal article" date="2002" name="Genome Biol.">
        <title>Annotation of the Drosophila melanogaster euchromatic genome: a systematic review.</title>
        <authorList>
            <person name="Misra S."/>
            <person name="Crosby M.A."/>
            <person name="Mungall C.J."/>
            <person name="Matthews B.B."/>
            <person name="Campbell K.S."/>
            <person name="Hradecky P."/>
            <person name="Huang Y."/>
            <person name="Kaminker J.S."/>
            <person name="Millburn G.H."/>
            <person name="Prochnik S.E."/>
            <person name="Smith C.D."/>
            <person name="Tupy J.L."/>
            <person name="Whitfield E.J."/>
            <person name="Bayraktaroglu L."/>
            <person name="Berman B.P."/>
            <person name="Bettencourt B.R."/>
            <person name="Celniker S.E."/>
            <person name="de Grey A.D.N.J."/>
            <person name="Drysdale R.A."/>
            <person name="Harris N.L."/>
            <person name="Richter J."/>
            <person name="Russo S."/>
            <person name="Schroeder A.J."/>
            <person name="Shu S.Q."/>
            <person name="Stapleton M."/>
            <person name="Yamada C."/>
            <person name="Ashburner M."/>
            <person name="Gelbart W.M."/>
            <person name="Rubin G.M."/>
            <person name="Lewis S.E."/>
        </authorList>
    </citation>
    <scope>GENOME REANNOTATION</scope>
    <source>
        <strain>Berkeley</strain>
    </source>
</reference>
<reference key="3">
    <citation type="journal article" date="2000" name="Cell">
        <title>An olfactory sensory map in the fly brain.</title>
        <authorList>
            <person name="Vosshall L.B."/>
            <person name="Wong A.M."/>
            <person name="Axel R."/>
        </authorList>
    </citation>
    <scope>TISSUE SPECIFICITY</scope>
</reference>
<reference key="4">
    <citation type="journal article" date="2012" name="Cell">
        <title>A conserved dedicated olfactory circuit for detecting harmful microbes in Drosophila.</title>
        <authorList>
            <person name="Stensmyr M.C."/>
            <person name="Dweck H.K."/>
            <person name="Farhan A."/>
            <person name="Ibba I."/>
            <person name="Strutz A."/>
            <person name="Mukunda L."/>
            <person name="Linz J."/>
            <person name="Grabe V."/>
            <person name="Steck K."/>
            <person name="Lavista-Llanos S."/>
            <person name="Wicher D."/>
            <person name="Sachse S."/>
            <person name="Knaden M."/>
            <person name="Becher P.G."/>
            <person name="Seki Y."/>
            <person name="Hansson B.S."/>
        </authorList>
    </citation>
    <scope>TISSUE SPECIFICITY</scope>
    <scope>FUNCTION</scope>
</reference>
<keyword id="KW-1003">Cell membrane</keyword>
<keyword id="KW-0472">Membrane</keyword>
<keyword id="KW-0552">Olfaction</keyword>
<keyword id="KW-0675">Receptor</keyword>
<keyword id="KW-1185">Reference proteome</keyword>
<keyword id="KW-0716">Sensory transduction</keyword>
<keyword id="KW-0807">Transducer</keyword>
<keyword id="KW-0812">Transmembrane</keyword>
<keyword id="KW-1133">Transmembrane helix</keyword>
<evidence type="ECO:0000250" key="1"/>
<evidence type="ECO:0000255" key="2"/>
<evidence type="ECO:0000269" key="3">
    <source>
    </source>
</evidence>
<evidence type="ECO:0000269" key="4">
    <source>
    </source>
</evidence>
<evidence type="ECO:0000305" key="5"/>